<feature type="chain" id="PRO_0000121032" description="PCI domain-containing protein 2">
    <location>
        <begin position="1"/>
        <end position="399"/>
    </location>
</feature>
<feature type="domain" description="PCI" evidence="1">
    <location>
        <begin position="210"/>
        <end position="391"/>
    </location>
</feature>
<name>PCID2_XENLA</name>
<keyword id="KW-1185">Reference proteome</keyword>
<dbReference type="EMBL" id="BC089256">
    <property type="protein sequence ID" value="AAH89256.1"/>
    <property type="molecule type" value="mRNA"/>
</dbReference>
<dbReference type="RefSeq" id="NP_001089237.1">
    <property type="nucleotide sequence ID" value="NM_001095768.1"/>
</dbReference>
<dbReference type="SMR" id="Q5FWP8"/>
<dbReference type="DNASU" id="734284"/>
<dbReference type="GeneID" id="734284"/>
<dbReference type="KEGG" id="xla:734284"/>
<dbReference type="AGR" id="Xenbase:XB-GENE-964462"/>
<dbReference type="CTD" id="734284"/>
<dbReference type="Xenbase" id="XB-GENE-964462">
    <property type="gene designation" value="pcid2.S"/>
</dbReference>
<dbReference type="OMA" id="INRMFTL"/>
<dbReference type="OrthoDB" id="10252687at2759"/>
<dbReference type="Proteomes" id="UP000186698">
    <property type="component" value="Chromosome 2S"/>
</dbReference>
<dbReference type="Bgee" id="734284">
    <property type="expression patterns" value="Expressed in egg cell and 19 other cell types or tissues"/>
</dbReference>
<dbReference type="GO" id="GO:0070390">
    <property type="term" value="C:transcription export complex 2"/>
    <property type="evidence" value="ECO:0000318"/>
    <property type="project" value="GO_Central"/>
</dbReference>
<dbReference type="GO" id="GO:0003690">
    <property type="term" value="F:double-stranded DNA binding"/>
    <property type="evidence" value="ECO:0000318"/>
    <property type="project" value="GO_Central"/>
</dbReference>
<dbReference type="GO" id="GO:0003723">
    <property type="term" value="F:RNA binding"/>
    <property type="evidence" value="ECO:0000318"/>
    <property type="project" value="GO_Central"/>
</dbReference>
<dbReference type="GO" id="GO:0016973">
    <property type="term" value="P:poly(A)+ mRNA export from nucleus"/>
    <property type="evidence" value="ECO:0000318"/>
    <property type="project" value="GO_Central"/>
</dbReference>
<dbReference type="GO" id="GO:0000973">
    <property type="term" value="P:post-transcriptional tethering of RNA polymerase II gene DNA at nuclear periphery"/>
    <property type="evidence" value="ECO:0000318"/>
    <property type="project" value="GO_Central"/>
</dbReference>
<dbReference type="GO" id="GO:0006368">
    <property type="term" value="P:transcription elongation by RNA polymerase II"/>
    <property type="evidence" value="ECO:0000318"/>
    <property type="project" value="GO_Central"/>
</dbReference>
<dbReference type="FunFam" id="1.10.10.10:FF:000146">
    <property type="entry name" value="PCI domain-containing protein 2 homolog"/>
    <property type="match status" value="1"/>
</dbReference>
<dbReference type="Gene3D" id="1.10.10.10">
    <property type="entry name" value="Winged helix-like DNA-binding domain superfamily/Winged helix DNA-binding domain"/>
    <property type="match status" value="1"/>
</dbReference>
<dbReference type="InterPro" id="IPR045114">
    <property type="entry name" value="Csn12-like"/>
</dbReference>
<dbReference type="InterPro" id="IPR000717">
    <property type="entry name" value="PCI_dom"/>
</dbReference>
<dbReference type="InterPro" id="IPR036388">
    <property type="entry name" value="WH-like_DNA-bd_sf"/>
</dbReference>
<dbReference type="PANTHER" id="PTHR12732:SF0">
    <property type="entry name" value="PCI DOMAIN-CONTAINING PROTEIN 2"/>
    <property type="match status" value="1"/>
</dbReference>
<dbReference type="PANTHER" id="PTHR12732">
    <property type="entry name" value="UNCHARACTERIZED PROTEASOME COMPONENT REGION PCI-CONTAINING"/>
    <property type="match status" value="1"/>
</dbReference>
<dbReference type="Pfam" id="PF01399">
    <property type="entry name" value="PCI"/>
    <property type="match status" value="1"/>
</dbReference>
<dbReference type="SMART" id="SM00753">
    <property type="entry name" value="PAM"/>
    <property type="match status" value="1"/>
</dbReference>
<dbReference type="PROSITE" id="PS50250">
    <property type="entry name" value="PCI"/>
    <property type="match status" value="1"/>
</dbReference>
<gene>
    <name type="primary">pcid2</name>
</gene>
<organism>
    <name type="scientific">Xenopus laevis</name>
    <name type="common">African clawed frog</name>
    <dbReference type="NCBI Taxonomy" id="8355"/>
    <lineage>
        <taxon>Eukaryota</taxon>
        <taxon>Metazoa</taxon>
        <taxon>Chordata</taxon>
        <taxon>Craniata</taxon>
        <taxon>Vertebrata</taxon>
        <taxon>Euteleostomi</taxon>
        <taxon>Amphibia</taxon>
        <taxon>Batrachia</taxon>
        <taxon>Anura</taxon>
        <taxon>Pipoidea</taxon>
        <taxon>Pipidae</taxon>
        <taxon>Xenopodinae</taxon>
        <taxon>Xenopus</taxon>
        <taxon>Xenopus</taxon>
    </lineage>
</organism>
<sequence length="399" mass="46163">MAHITINQYLQQVQEAIDSKDGFNCADLVSFKHPHVANARLQLLSPEEKCQQVLEPPYDEMFAAHLRCINAASNHDFVEAYKYQTLVVQSFLKSFQAHKEENWALPIMYSITLDLRIFANNADQQLVKKGKGKVGDMLEKAAEILMSCFRVCASDTRAAFEDSKKWGMLFLVNQLFKIYFKISKLHLCKPLIRAIDSSNFKEEYTMAQRVTFKYYVGRKSMFDSDFKKAEEYLSFAFEHCHRSSQKNKRMILIYLLPVKMLLGHMPTIHLLKKYDLMQFAEVTKAVSEGNLLLLTEALTKHETFFIRCGIFLILEKLKIISYRNLFKKVYLLLKTHQLSLDAFLVALKFMEVGDVDIDEVQCIIANLIYMGHIKGYISHQHQKLVVSKQNPFPPLSTVC</sequence>
<accession>Q5FWP8</accession>
<reference key="1">
    <citation type="submission" date="2005-01" db="EMBL/GenBank/DDBJ databases">
        <authorList>
            <consortium name="NIH - Xenopus Gene Collection (XGC) project"/>
        </authorList>
    </citation>
    <scope>NUCLEOTIDE SEQUENCE [LARGE SCALE MRNA]</scope>
    <source>
        <tissue>Egg</tissue>
    </source>
</reference>
<comment type="similarity">
    <text evidence="2">Belongs to the CSN12 family.</text>
</comment>
<protein>
    <recommendedName>
        <fullName>PCI domain-containing protein 2</fullName>
    </recommendedName>
    <alternativeName>
        <fullName>CSN12-like protein</fullName>
    </alternativeName>
</protein>
<evidence type="ECO:0000255" key="1">
    <source>
        <dbReference type="PROSITE-ProRule" id="PRU01185"/>
    </source>
</evidence>
<evidence type="ECO:0000305" key="2"/>
<proteinExistence type="evidence at transcript level"/>